<name>DGTP_PSEAE</name>
<organism>
    <name type="scientific">Pseudomonas aeruginosa (strain ATCC 15692 / DSM 22644 / CIP 104116 / JCM 14847 / LMG 12228 / 1C / PRS 101 / PAO1)</name>
    <dbReference type="NCBI Taxonomy" id="208964"/>
    <lineage>
        <taxon>Bacteria</taxon>
        <taxon>Pseudomonadati</taxon>
        <taxon>Pseudomonadota</taxon>
        <taxon>Gammaproteobacteria</taxon>
        <taxon>Pseudomonadales</taxon>
        <taxon>Pseudomonadaceae</taxon>
        <taxon>Pseudomonas</taxon>
    </lineage>
</organism>
<reference key="1">
    <citation type="journal article" date="2000" name="Nature">
        <title>Complete genome sequence of Pseudomonas aeruginosa PAO1, an opportunistic pathogen.</title>
        <authorList>
            <person name="Stover C.K."/>
            <person name="Pham X.-Q.T."/>
            <person name="Erwin A.L."/>
            <person name="Mizoguchi S.D."/>
            <person name="Warrener P."/>
            <person name="Hickey M.J."/>
            <person name="Brinkman F.S.L."/>
            <person name="Hufnagle W.O."/>
            <person name="Kowalik D.J."/>
            <person name="Lagrou M."/>
            <person name="Garber R.L."/>
            <person name="Goltry L."/>
            <person name="Tolentino E."/>
            <person name="Westbrock-Wadman S."/>
            <person name="Yuan Y."/>
            <person name="Brody L.L."/>
            <person name="Coulter S.N."/>
            <person name="Folger K.R."/>
            <person name="Kas A."/>
            <person name="Larbig K."/>
            <person name="Lim R.M."/>
            <person name="Smith K.A."/>
            <person name="Spencer D.H."/>
            <person name="Wong G.K.-S."/>
            <person name="Wu Z."/>
            <person name="Paulsen I.T."/>
            <person name="Reizer J."/>
            <person name="Saier M.H. Jr."/>
            <person name="Hancock R.E.W."/>
            <person name="Lory S."/>
            <person name="Olson M.V."/>
        </authorList>
    </citation>
    <scope>NUCLEOTIDE SEQUENCE [LARGE SCALE GENOMIC DNA]</scope>
    <source>
        <strain>ATCC 15692 / DSM 22644 / CIP 104116 / JCM 14847 / LMG 12228 / 1C / PRS 101 / PAO1</strain>
    </source>
</reference>
<keyword id="KW-0002">3D-structure</keyword>
<keyword id="KW-0378">Hydrolase</keyword>
<keyword id="KW-0460">Magnesium</keyword>
<keyword id="KW-1185">Reference proteome</keyword>
<comment type="function">
    <text evidence="1">dGTPase preferentially hydrolyzes dGTP over the other canonical NTPs.</text>
</comment>
<comment type="catalytic activity">
    <reaction evidence="1">
        <text>dGTP + H2O = 2'-deoxyguanosine + triphosphate + H(+)</text>
        <dbReference type="Rhea" id="RHEA:15193"/>
        <dbReference type="ChEBI" id="CHEBI:15377"/>
        <dbReference type="ChEBI" id="CHEBI:15378"/>
        <dbReference type="ChEBI" id="CHEBI:17172"/>
        <dbReference type="ChEBI" id="CHEBI:18036"/>
        <dbReference type="ChEBI" id="CHEBI:61429"/>
        <dbReference type="EC" id="3.1.5.1"/>
    </reaction>
</comment>
<comment type="cofactor">
    <cofactor evidence="1">
        <name>Mg(2+)</name>
        <dbReference type="ChEBI" id="CHEBI:18420"/>
    </cofactor>
</comment>
<comment type="similarity">
    <text evidence="1">Belongs to the dGTPase family. Type 1 subfamily.</text>
</comment>
<comment type="caution">
    <text evidence="3">As this bacterium is not an Enterobacteriaceae, this protein may not have a true dGTPase activity.</text>
</comment>
<accession>Q9I4L1</accession>
<sequence length="498" mass="56742">MPGAVDFKERISRQRPHDRETYGHAGNTDLQDIVYQLESDRGRIVNSAAVRRLQQKTQVFPLERNAAVRSRLTHSLEVQQTGRFIVRTLFRQLGPRAAEVGLDGLEGALESLVEMACLMHDVGNPPFGHFGEYAINDWFERNLDALFERRIPPGQGDGLLQQRMLTDLKHFEGNAQAIRLVVKLLRLNLTYTQTAGLLKYVRPAYEPKPDKAAANHYLNKKPGFYLSEEAFVDELRRVLGMRPGTRHPVAYIMEAADDISYCLADIEDSVEKGILDIRQLADLLVKKFAVHHSPDAPIPGDADNMSFQRMVDYSLEKAEREPINKVSEFFIRLRVKMIHPLVQHAAQQFIDNFEAVHAGTLGRALMEDGSLPHAIVQTFKDVAMEWVFCHPEVETLELQGYRIIQGLLDFYAPLLRLPAEEFQALAEGRQAAAPHPQLLVRRLPSQQIKAYLEAMKGVAEDPLQRQWEFYHRCRMLQDFVSGMTDQHAQDEYRALSAL</sequence>
<proteinExistence type="evidence at protein level"/>
<protein>
    <recommendedName>
        <fullName evidence="1">Probable deoxyguanosinetriphosphate triphosphohydrolase</fullName>
        <shortName evidence="1">dGTP triphosphohydrolase</shortName>
        <shortName evidence="1">dGTPase</shortName>
        <ecNumber evidence="1">3.1.5.1</ecNumber>
    </recommendedName>
</protein>
<evidence type="ECO:0000255" key="1">
    <source>
        <dbReference type="HAMAP-Rule" id="MF_00030"/>
    </source>
</evidence>
<evidence type="ECO:0000255" key="2">
    <source>
        <dbReference type="PROSITE-ProRule" id="PRU01175"/>
    </source>
</evidence>
<evidence type="ECO:0000305" key="3"/>
<evidence type="ECO:0007829" key="4">
    <source>
        <dbReference type="PDB" id="7W1F"/>
    </source>
</evidence>
<dbReference type="EC" id="3.1.5.1" evidence="1"/>
<dbReference type="EMBL" id="AE004091">
    <property type="protein sequence ID" value="AAG04513.1"/>
    <property type="molecule type" value="Genomic_DNA"/>
</dbReference>
<dbReference type="PIR" id="H83505">
    <property type="entry name" value="H83505"/>
</dbReference>
<dbReference type="RefSeq" id="NP_249815.1">
    <property type="nucleotide sequence ID" value="NC_002516.2"/>
</dbReference>
<dbReference type="RefSeq" id="WP_003112492.1">
    <property type="nucleotide sequence ID" value="NZ_QZGE01000006.1"/>
</dbReference>
<dbReference type="PDB" id="7W1F">
    <property type="method" value="X-ray"/>
    <property type="resolution" value="2.90 A"/>
    <property type="chains" value="A/B/C=1-498"/>
</dbReference>
<dbReference type="PDBsum" id="7W1F"/>
<dbReference type="SMR" id="Q9I4L1"/>
<dbReference type="FunCoup" id="Q9I4L1">
    <property type="interactions" value="199"/>
</dbReference>
<dbReference type="STRING" id="208964.PA1124"/>
<dbReference type="PaxDb" id="208964-PA1124"/>
<dbReference type="GeneID" id="880761"/>
<dbReference type="KEGG" id="pae:PA1124"/>
<dbReference type="PATRIC" id="fig|208964.12.peg.1169"/>
<dbReference type="PseudoCAP" id="PA1124"/>
<dbReference type="HOGENOM" id="CLU_028163_2_1_6"/>
<dbReference type="InParanoid" id="Q9I4L1"/>
<dbReference type="OrthoDB" id="9803619at2"/>
<dbReference type="PhylomeDB" id="Q9I4L1"/>
<dbReference type="BioCyc" id="PAER208964:G1FZ6-1150-MONOMER"/>
<dbReference type="Proteomes" id="UP000002438">
    <property type="component" value="Chromosome"/>
</dbReference>
<dbReference type="GO" id="GO:0008832">
    <property type="term" value="F:dGTPase activity"/>
    <property type="evidence" value="ECO:0000318"/>
    <property type="project" value="GO_Central"/>
</dbReference>
<dbReference type="GO" id="GO:0000287">
    <property type="term" value="F:magnesium ion binding"/>
    <property type="evidence" value="ECO:0007669"/>
    <property type="project" value="UniProtKB-UniRule"/>
</dbReference>
<dbReference type="GO" id="GO:0006203">
    <property type="term" value="P:dGTP catabolic process"/>
    <property type="evidence" value="ECO:0000318"/>
    <property type="project" value="GO_Central"/>
</dbReference>
<dbReference type="CDD" id="cd00077">
    <property type="entry name" value="HDc"/>
    <property type="match status" value="1"/>
</dbReference>
<dbReference type="FunFam" id="1.10.3210.10:FF:000010">
    <property type="entry name" value="Deoxyguanosinetriphosphate triphosphohydrolase"/>
    <property type="match status" value="1"/>
</dbReference>
<dbReference type="Gene3D" id="1.10.3210.10">
    <property type="entry name" value="Hypothetical protein af1432"/>
    <property type="match status" value="2"/>
</dbReference>
<dbReference type="Gene3D" id="1.10.3410.10">
    <property type="entry name" value="putative deoxyguanosinetriphosphate triphosphohydrolase like domain"/>
    <property type="match status" value="1"/>
</dbReference>
<dbReference type="HAMAP" id="MF_00030">
    <property type="entry name" value="dGTPase_type1"/>
    <property type="match status" value="1"/>
</dbReference>
<dbReference type="InterPro" id="IPR023293">
    <property type="entry name" value="dGTP_triP_hydro_central_sf"/>
</dbReference>
<dbReference type="InterPro" id="IPR006261">
    <property type="entry name" value="dGTPase"/>
</dbReference>
<dbReference type="InterPro" id="IPR050135">
    <property type="entry name" value="dGTPase-like"/>
</dbReference>
<dbReference type="InterPro" id="IPR020779">
    <property type="entry name" value="dNTPase_1"/>
</dbReference>
<dbReference type="InterPro" id="IPR003607">
    <property type="entry name" value="HD/PDEase_dom"/>
</dbReference>
<dbReference type="InterPro" id="IPR006674">
    <property type="entry name" value="HD_domain"/>
</dbReference>
<dbReference type="NCBIfam" id="TIGR01353">
    <property type="entry name" value="dGTP_triPase"/>
    <property type="match status" value="1"/>
</dbReference>
<dbReference type="NCBIfam" id="NF003429">
    <property type="entry name" value="PRK04926.1"/>
    <property type="match status" value="1"/>
</dbReference>
<dbReference type="PANTHER" id="PTHR11373:SF32">
    <property type="entry name" value="DEOXYGUANOSINETRIPHOSPHATE TRIPHOSPHOHYDROLASE"/>
    <property type="match status" value="1"/>
</dbReference>
<dbReference type="PANTHER" id="PTHR11373">
    <property type="entry name" value="DEOXYNUCLEOSIDE TRIPHOSPHATE TRIPHOSPHOHYDROLASE"/>
    <property type="match status" value="1"/>
</dbReference>
<dbReference type="Pfam" id="PF01966">
    <property type="entry name" value="HD"/>
    <property type="match status" value="1"/>
</dbReference>
<dbReference type="SMART" id="SM00471">
    <property type="entry name" value="HDc"/>
    <property type="match status" value="1"/>
</dbReference>
<dbReference type="SUPFAM" id="SSF109604">
    <property type="entry name" value="HD-domain/PDEase-like"/>
    <property type="match status" value="1"/>
</dbReference>
<dbReference type="PROSITE" id="PS51831">
    <property type="entry name" value="HD"/>
    <property type="match status" value="1"/>
</dbReference>
<feature type="chain" id="PRO_0000205283" description="Probable deoxyguanosinetriphosphate triphosphohydrolase">
    <location>
        <begin position="1"/>
        <end position="498"/>
    </location>
</feature>
<feature type="domain" description="HD" evidence="2">
    <location>
        <begin position="71"/>
        <end position="262"/>
    </location>
</feature>
<feature type="helix" evidence="4">
    <location>
        <begin position="30"/>
        <end position="45"/>
    </location>
</feature>
<feature type="helix" evidence="4">
    <location>
        <begin position="48"/>
        <end position="53"/>
    </location>
</feature>
<feature type="strand" evidence="4">
    <location>
        <begin position="55"/>
        <end position="60"/>
    </location>
</feature>
<feature type="turn" evidence="4">
    <location>
        <begin position="62"/>
        <end position="64"/>
    </location>
</feature>
<feature type="helix" evidence="4">
    <location>
        <begin position="71"/>
        <end position="93"/>
    </location>
</feature>
<feature type="helix" evidence="4">
    <location>
        <begin position="94"/>
        <end position="96"/>
    </location>
</feature>
<feature type="helix" evidence="4">
    <location>
        <begin position="97"/>
        <end position="100"/>
    </location>
</feature>
<feature type="helix" evidence="4">
    <location>
        <begin position="106"/>
        <end position="118"/>
    </location>
</feature>
<feature type="turn" evidence="4">
    <location>
        <begin position="119"/>
        <end position="121"/>
    </location>
</feature>
<feature type="strand" evidence="4">
    <location>
        <begin position="122"/>
        <end position="124"/>
    </location>
</feature>
<feature type="helix" evidence="4">
    <location>
        <begin position="130"/>
        <end position="150"/>
    </location>
</feature>
<feature type="strand" evidence="4">
    <location>
        <begin position="153"/>
        <end position="156"/>
    </location>
</feature>
<feature type="helix" evidence="4">
    <location>
        <begin position="158"/>
        <end position="169"/>
    </location>
</feature>
<feature type="helix" evidence="4">
    <location>
        <begin position="173"/>
        <end position="183"/>
    </location>
</feature>
<feature type="helix" evidence="4">
    <location>
        <begin position="191"/>
        <end position="195"/>
    </location>
</feature>
<feature type="strand" evidence="4">
    <location>
        <begin position="202"/>
        <end position="206"/>
    </location>
</feature>
<feature type="strand" evidence="4">
    <location>
        <begin position="219"/>
        <end position="222"/>
    </location>
</feature>
<feature type="helix" evidence="4">
    <location>
        <begin position="226"/>
        <end position="228"/>
    </location>
</feature>
<feature type="helix" evidence="4">
    <location>
        <begin position="229"/>
        <end position="239"/>
    </location>
</feature>
<feature type="helix" evidence="4">
    <location>
        <begin position="248"/>
        <end position="259"/>
    </location>
</feature>
<feature type="helix" evidence="4">
    <location>
        <begin position="263"/>
        <end position="272"/>
    </location>
</feature>
<feature type="helix" evidence="4">
    <location>
        <begin position="277"/>
        <end position="288"/>
    </location>
</feature>
<feature type="turn" evidence="4">
    <location>
        <begin position="289"/>
        <end position="291"/>
    </location>
</feature>
<feature type="helix" evidence="4">
    <location>
        <begin position="307"/>
        <end position="320"/>
    </location>
</feature>
<feature type="strand" evidence="4">
    <location>
        <begin position="321"/>
        <end position="323"/>
    </location>
</feature>
<feature type="helix" evidence="4">
    <location>
        <begin position="325"/>
        <end position="351"/>
    </location>
</feature>
<feature type="helix" evidence="4">
    <location>
        <begin position="353"/>
        <end position="358"/>
    </location>
</feature>
<feature type="strand" evidence="4">
    <location>
        <begin position="368"/>
        <end position="370"/>
    </location>
</feature>
<feature type="helix" evidence="4">
    <location>
        <begin position="371"/>
        <end position="386"/>
    </location>
</feature>
<feature type="turn" evidence="4">
    <location>
        <begin position="387"/>
        <end position="389"/>
    </location>
</feature>
<feature type="helix" evidence="4">
    <location>
        <begin position="391"/>
        <end position="416"/>
    </location>
</feature>
<feature type="helix" evidence="4">
    <location>
        <begin position="419"/>
        <end position="427"/>
    </location>
</feature>
<feature type="helix" evidence="4">
    <location>
        <begin position="435"/>
        <end position="442"/>
    </location>
</feature>
<feature type="helix" evidence="4">
    <location>
        <begin position="445"/>
        <end position="457"/>
    </location>
</feature>
<feature type="helix" evidence="4">
    <location>
        <begin position="464"/>
        <end position="481"/>
    </location>
</feature>
<feature type="helix" evidence="4">
    <location>
        <begin position="485"/>
        <end position="496"/>
    </location>
</feature>
<gene>
    <name evidence="1" type="primary">dgt</name>
    <name type="ordered locus">PA1124</name>
</gene>